<dbReference type="EMBL" id="CR936257">
    <property type="protein sequence ID" value="CAI48244.1"/>
    <property type="molecule type" value="Genomic_DNA"/>
</dbReference>
<dbReference type="RefSeq" id="WP_011321882.1">
    <property type="nucleotide sequence ID" value="NC_007426.1"/>
</dbReference>
<dbReference type="SMR" id="Q3IUD7"/>
<dbReference type="STRING" id="348780.NP_0306A"/>
<dbReference type="EnsemblBacteria" id="CAI48244">
    <property type="protein sequence ID" value="CAI48244"/>
    <property type="gene ID" value="NP_0306A"/>
</dbReference>
<dbReference type="GeneID" id="3703165"/>
<dbReference type="KEGG" id="nph:NP_0306A"/>
<dbReference type="eggNOG" id="arCOG01758">
    <property type="taxonomic scope" value="Archaea"/>
</dbReference>
<dbReference type="HOGENOM" id="CLU_122625_0_1_2"/>
<dbReference type="OrthoDB" id="371736at2157"/>
<dbReference type="Proteomes" id="UP000002698">
    <property type="component" value="Chromosome"/>
</dbReference>
<dbReference type="GO" id="GO:0015935">
    <property type="term" value="C:small ribosomal subunit"/>
    <property type="evidence" value="ECO:0007669"/>
    <property type="project" value="InterPro"/>
</dbReference>
<dbReference type="GO" id="GO:0003735">
    <property type="term" value="F:structural constituent of ribosome"/>
    <property type="evidence" value="ECO:0007669"/>
    <property type="project" value="InterPro"/>
</dbReference>
<dbReference type="GO" id="GO:0000049">
    <property type="term" value="F:tRNA binding"/>
    <property type="evidence" value="ECO:0007669"/>
    <property type="project" value="UniProtKB-UniRule"/>
</dbReference>
<dbReference type="GO" id="GO:0006412">
    <property type="term" value="P:translation"/>
    <property type="evidence" value="ECO:0007669"/>
    <property type="project" value="UniProtKB-UniRule"/>
</dbReference>
<dbReference type="FunFam" id="3.30.70.600:FF:000004">
    <property type="entry name" value="30S ribosomal protein S10"/>
    <property type="match status" value="1"/>
</dbReference>
<dbReference type="Gene3D" id="3.30.70.600">
    <property type="entry name" value="Ribosomal protein S10 domain"/>
    <property type="match status" value="1"/>
</dbReference>
<dbReference type="HAMAP" id="MF_00508">
    <property type="entry name" value="Ribosomal_uS10"/>
    <property type="match status" value="1"/>
</dbReference>
<dbReference type="InterPro" id="IPR001848">
    <property type="entry name" value="Ribosomal_uS10"/>
</dbReference>
<dbReference type="InterPro" id="IPR018268">
    <property type="entry name" value="Ribosomal_uS10_CS"/>
</dbReference>
<dbReference type="InterPro" id="IPR027486">
    <property type="entry name" value="Ribosomal_uS10_dom"/>
</dbReference>
<dbReference type="InterPro" id="IPR036838">
    <property type="entry name" value="Ribosomal_uS10_dom_sf"/>
</dbReference>
<dbReference type="InterPro" id="IPR005729">
    <property type="entry name" value="Ribosomal_uS10_euk/arc"/>
</dbReference>
<dbReference type="NCBIfam" id="TIGR01046">
    <property type="entry name" value="uS10_euk_arch"/>
    <property type="match status" value="1"/>
</dbReference>
<dbReference type="PANTHER" id="PTHR11700">
    <property type="entry name" value="30S RIBOSOMAL PROTEIN S10 FAMILY MEMBER"/>
    <property type="match status" value="1"/>
</dbReference>
<dbReference type="Pfam" id="PF00338">
    <property type="entry name" value="Ribosomal_S10"/>
    <property type="match status" value="1"/>
</dbReference>
<dbReference type="PRINTS" id="PR00971">
    <property type="entry name" value="RIBOSOMALS10"/>
</dbReference>
<dbReference type="SMART" id="SM01403">
    <property type="entry name" value="Ribosomal_S10"/>
    <property type="match status" value="1"/>
</dbReference>
<dbReference type="SUPFAM" id="SSF54999">
    <property type="entry name" value="Ribosomal protein S10"/>
    <property type="match status" value="1"/>
</dbReference>
<dbReference type="PROSITE" id="PS00361">
    <property type="entry name" value="RIBOSOMAL_S10"/>
    <property type="match status" value="1"/>
</dbReference>
<organism>
    <name type="scientific">Natronomonas pharaonis (strain ATCC 35678 / DSM 2160 / CIP 103997 / JCM 8858 / NBRC 14720 / NCIMB 2260 / Gabara)</name>
    <name type="common">Halobacterium pharaonis</name>
    <dbReference type="NCBI Taxonomy" id="348780"/>
    <lineage>
        <taxon>Archaea</taxon>
        <taxon>Methanobacteriati</taxon>
        <taxon>Methanobacteriota</taxon>
        <taxon>Stenosarchaea group</taxon>
        <taxon>Halobacteria</taxon>
        <taxon>Halobacteriales</taxon>
        <taxon>Haloarculaceae</taxon>
        <taxon>Natronomonas</taxon>
    </lineage>
</organism>
<reference key="1">
    <citation type="journal article" date="2005" name="Genome Res.">
        <title>Living with two extremes: conclusions from the genome sequence of Natronomonas pharaonis.</title>
        <authorList>
            <person name="Falb M."/>
            <person name="Pfeiffer F."/>
            <person name="Palm P."/>
            <person name="Rodewald K."/>
            <person name="Hickmann V."/>
            <person name="Tittor J."/>
            <person name="Oesterhelt D."/>
        </authorList>
    </citation>
    <scope>NUCLEOTIDE SEQUENCE [LARGE SCALE GENOMIC DNA]</scope>
    <source>
        <strain>ATCC 35678 / DSM 2160 / CIP 103997 / JCM 8858 / NBRC 14720 / NCIMB 2260 / Gabara</strain>
    </source>
</reference>
<evidence type="ECO:0000255" key="1">
    <source>
        <dbReference type="HAMAP-Rule" id="MF_00508"/>
    </source>
</evidence>
<evidence type="ECO:0000256" key="2">
    <source>
        <dbReference type="SAM" id="MobiDB-lite"/>
    </source>
</evidence>
<evidence type="ECO:0000305" key="3"/>
<accession>Q3IUD7</accession>
<gene>
    <name evidence="1" type="primary">rps10</name>
    <name type="ordered locus">NP_0306A</name>
</gene>
<keyword id="KW-1185">Reference proteome</keyword>
<keyword id="KW-0687">Ribonucleoprotein</keyword>
<keyword id="KW-0689">Ribosomal protein</keyword>
<feature type="chain" id="PRO_0000237125" description="Small ribosomal subunit protein uS10">
    <location>
        <begin position="1"/>
        <end position="102"/>
    </location>
</feature>
<feature type="region of interest" description="Disordered" evidence="2">
    <location>
        <begin position="34"/>
        <end position="58"/>
    </location>
</feature>
<sequence length="102" mass="11469">MQQARVRLAGTAPEDLDDICDDVREIADKTGVTLSGPVPLPTKTLEIPARKSPDGEGTATWEHWEMRVHKRLIDIDADERALRQLMRIQVPNDVSIEIVLED</sequence>
<name>RS10_NATPD</name>
<protein>
    <recommendedName>
        <fullName evidence="1">Small ribosomal subunit protein uS10</fullName>
    </recommendedName>
    <alternativeName>
        <fullName evidence="3">30S ribosomal protein S10</fullName>
    </alternativeName>
</protein>
<proteinExistence type="inferred from homology"/>
<comment type="function">
    <text evidence="1">Involved in the binding of tRNA to the ribosomes.</text>
</comment>
<comment type="subunit">
    <text evidence="1">Part of the 30S ribosomal subunit.</text>
</comment>
<comment type="similarity">
    <text evidence="1">Belongs to the universal ribosomal protein uS10 family.</text>
</comment>